<proteinExistence type="inferred from homology"/>
<feature type="chain" id="PRO_1000142637" description="Large ribosomal subunit protein uL18">
    <location>
        <begin position="1"/>
        <end position="119"/>
    </location>
</feature>
<feature type="region of interest" description="Disordered" evidence="2">
    <location>
        <begin position="1"/>
        <end position="20"/>
    </location>
</feature>
<feature type="compositionally biased region" description="Basic residues" evidence="2">
    <location>
        <begin position="9"/>
        <end position="19"/>
    </location>
</feature>
<reference key="1">
    <citation type="submission" date="2008-06" db="EMBL/GenBank/DDBJ databases">
        <title>Complete sequence of Chlorobaculum parvum NCIB 8327.</title>
        <authorList>
            <consortium name="US DOE Joint Genome Institute"/>
            <person name="Lucas S."/>
            <person name="Copeland A."/>
            <person name="Lapidus A."/>
            <person name="Glavina del Rio T."/>
            <person name="Dalin E."/>
            <person name="Tice H."/>
            <person name="Bruce D."/>
            <person name="Goodwin L."/>
            <person name="Pitluck S."/>
            <person name="Schmutz J."/>
            <person name="Larimer F."/>
            <person name="Land M."/>
            <person name="Hauser L."/>
            <person name="Kyrpides N."/>
            <person name="Mikhailova N."/>
            <person name="Zhao F."/>
            <person name="Li T."/>
            <person name="Liu Z."/>
            <person name="Overmann J."/>
            <person name="Bryant D.A."/>
            <person name="Richardson P."/>
        </authorList>
    </citation>
    <scope>NUCLEOTIDE SEQUENCE [LARGE SCALE GENOMIC DNA]</scope>
    <source>
        <strain>DSM 263 / NCIMB 8327</strain>
    </source>
</reference>
<name>RL18_CHLP8</name>
<protein>
    <recommendedName>
        <fullName evidence="1">Large ribosomal subunit protein uL18</fullName>
    </recommendedName>
    <alternativeName>
        <fullName evidence="3">50S ribosomal protein L18</fullName>
    </alternativeName>
</protein>
<accession>B3QR81</accession>
<evidence type="ECO:0000255" key="1">
    <source>
        <dbReference type="HAMAP-Rule" id="MF_01337"/>
    </source>
</evidence>
<evidence type="ECO:0000256" key="2">
    <source>
        <dbReference type="SAM" id="MobiDB-lite"/>
    </source>
</evidence>
<evidence type="ECO:0000305" key="3"/>
<sequence length="119" mass="12952">MSQIDKAARRQKIKARSRATVHGNATRPRLCVYRSLSQIYAQLIDDESGKTLMAVSTMSKDNAGLQGSKSERSAAVGKQLAEKAIAQGISNVVFDRNGFRYHGRIKALADGAREAGLIF</sequence>
<comment type="function">
    <text evidence="1">This is one of the proteins that bind and probably mediate the attachment of the 5S RNA into the large ribosomal subunit, where it forms part of the central protuberance.</text>
</comment>
<comment type="subunit">
    <text evidence="1">Part of the 50S ribosomal subunit; part of the 5S rRNA/L5/L18/L25 subcomplex. Contacts the 5S and 23S rRNAs.</text>
</comment>
<comment type="similarity">
    <text evidence="1">Belongs to the universal ribosomal protein uL18 family.</text>
</comment>
<keyword id="KW-0687">Ribonucleoprotein</keyword>
<keyword id="KW-0689">Ribosomal protein</keyword>
<keyword id="KW-0694">RNA-binding</keyword>
<keyword id="KW-0699">rRNA-binding</keyword>
<organism>
    <name type="scientific">Chlorobaculum parvum (strain DSM 263 / NCIMB 8327)</name>
    <name type="common">Chlorobium vibrioforme subsp. thiosulfatophilum</name>
    <dbReference type="NCBI Taxonomy" id="517417"/>
    <lineage>
        <taxon>Bacteria</taxon>
        <taxon>Pseudomonadati</taxon>
        <taxon>Chlorobiota</taxon>
        <taxon>Chlorobiia</taxon>
        <taxon>Chlorobiales</taxon>
        <taxon>Chlorobiaceae</taxon>
        <taxon>Chlorobaculum</taxon>
    </lineage>
</organism>
<gene>
    <name evidence="1" type="primary">rplR</name>
    <name type="ordered locus">Cpar_0193</name>
</gene>
<dbReference type="EMBL" id="CP001099">
    <property type="protein sequence ID" value="ACF10620.1"/>
    <property type="molecule type" value="Genomic_DNA"/>
</dbReference>
<dbReference type="RefSeq" id="WP_012501455.1">
    <property type="nucleotide sequence ID" value="NC_011027.1"/>
</dbReference>
<dbReference type="SMR" id="B3QR81"/>
<dbReference type="STRING" id="517417.Cpar_0193"/>
<dbReference type="KEGG" id="cpc:Cpar_0193"/>
<dbReference type="eggNOG" id="COG0256">
    <property type="taxonomic scope" value="Bacteria"/>
</dbReference>
<dbReference type="HOGENOM" id="CLU_098841_0_1_10"/>
<dbReference type="OrthoDB" id="9810939at2"/>
<dbReference type="Proteomes" id="UP000008811">
    <property type="component" value="Chromosome"/>
</dbReference>
<dbReference type="GO" id="GO:0022625">
    <property type="term" value="C:cytosolic large ribosomal subunit"/>
    <property type="evidence" value="ECO:0007669"/>
    <property type="project" value="TreeGrafter"/>
</dbReference>
<dbReference type="GO" id="GO:0008097">
    <property type="term" value="F:5S rRNA binding"/>
    <property type="evidence" value="ECO:0007669"/>
    <property type="project" value="TreeGrafter"/>
</dbReference>
<dbReference type="GO" id="GO:0003735">
    <property type="term" value="F:structural constituent of ribosome"/>
    <property type="evidence" value="ECO:0007669"/>
    <property type="project" value="InterPro"/>
</dbReference>
<dbReference type="GO" id="GO:0006412">
    <property type="term" value="P:translation"/>
    <property type="evidence" value="ECO:0007669"/>
    <property type="project" value="UniProtKB-UniRule"/>
</dbReference>
<dbReference type="CDD" id="cd00432">
    <property type="entry name" value="Ribosomal_L18_L5e"/>
    <property type="match status" value="1"/>
</dbReference>
<dbReference type="FunFam" id="3.30.420.100:FF:000001">
    <property type="entry name" value="50S ribosomal protein L18"/>
    <property type="match status" value="1"/>
</dbReference>
<dbReference type="Gene3D" id="3.30.420.100">
    <property type="match status" value="1"/>
</dbReference>
<dbReference type="HAMAP" id="MF_01337_B">
    <property type="entry name" value="Ribosomal_uL18_B"/>
    <property type="match status" value="1"/>
</dbReference>
<dbReference type="InterPro" id="IPR004389">
    <property type="entry name" value="Ribosomal_uL18_bac-type"/>
</dbReference>
<dbReference type="InterPro" id="IPR005484">
    <property type="entry name" value="Ribosomal_uL18_bac/euk"/>
</dbReference>
<dbReference type="NCBIfam" id="TIGR00060">
    <property type="entry name" value="L18_bact"/>
    <property type="match status" value="1"/>
</dbReference>
<dbReference type="PANTHER" id="PTHR12899">
    <property type="entry name" value="39S RIBOSOMAL PROTEIN L18, MITOCHONDRIAL"/>
    <property type="match status" value="1"/>
</dbReference>
<dbReference type="PANTHER" id="PTHR12899:SF3">
    <property type="entry name" value="LARGE RIBOSOMAL SUBUNIT PROTEIN UL18M"/>
    <property type="match status" value="1"/>
</dbReference>
<dbReference type="Pfam" id="PF00861">
    <property type="entry name" value="Ribosomal_L18p"/>
    <property type="match status" value="1"/>
</dbReference>
<dbReference type="SUPFAM" id="SSF53137">
    <property type="entry name" value="Translational machinery components"/>
    <property type="match status" value="1"/>
</dbReference>